<evidence type="ECO:0000255" key="1">
    <source>
        <dbReference type="HAMAP-Rule" id="MF_00432"/>
    </source>
</evidence>
<organism>
    <name type="scientific">Oenothera biennis</name>
    <name type="common">German evening primrose</name>
    <name type="synonym">Onagra biennis</name>
    <dbReference type="NCBI Taxonomy" id="3942"/>
    <lineage>
        <taxon>Eukaryota</taxon>
        <taxon>Viridiplantae</taxon>
        <taxon>Streptophyta</taxon>
        <taxon>Embryophyta</taxon>
        <taxon>Tracheophyta</taxon>
        <taxon>Spermatophyta</taxon>
        <taxon>Magnoliopsida</taxon>
        <taxon>eudicotyledons</taxon>
        <taxon>Gunneridae</taxon>
        <taxon>Pentapetalae</taxon>
        <taxon>rosids</taxon>
        <taxon>malvids</taxon>
        <taxon>Myrtales</taxon>
        <taxon>Onagraceae</taxon>
        <taxon>Onagroideae</taxon>
        <taxon>Onagreae</taxon>
        <taxon>Oenothera</taxon>
    </lineage>
</organism>
<accession>B0Z4X9</accession>
<reference key="1">
    <citation type="journal article" date="2008" name="Nucleic Acids Res.">
        <title>The complete nucleotide sequences of the five genetically distinct plastid genomes of Oenothera, subsection Oenothera: I. Sequence evaluation and plastome evolution.</title>
        <authorList>
            <person name="Greiner S."/>
            <person name="Wang X."/>
            <person name="Rauwolf U."/>
            <person name="Silber M.V."/>
            <person name="Mayer K."/>
            <person name="Meurer J."/>
            <person name="Haberer G."/>
            <person name="Herrmann R.G."/>
        </authorList>
    </citation>
    <scope>NUCLEOTIDE SEQUENCE [LARGE SCALE GENOMIC DNA]</scope>
    <source>
        <strain>cv. Suaveolens Grado</strain>
    </source>
</reference>
<gene>
    <name evidence="1" type="primary">petG</name>
</gene>
<proteinExistence type="inferred from homology"/>
<name>PETG_OENBI</name>
<sequence length="37" mass="4170">MIEVFLFGIVLGLIPITLAGLFVTAYLQYRRGDQLDL</sequence>
<comment type="function">
    <text evidence="1">Component of the cytochrome b6-f complex, which mediates electron transfer between photosystem II (PSII) and photosystem I (PSI), cyclic electron flow around PSI, and state transitions. PetG is required for either the stability or assembly of the cytochrome b6-f complex.</text>
</comment>
<comment type="subunit">
    <text evidence="1">The 4 large subunits of the cytochrome b6-f complex are cytochrome b6, subunit IV (17 kDa polypeptide, PetD), cytochrome f and the Rieske protein, while the 4 small subunits are PetG, PetL, PetM and PetN. The complex functions as a dimer.</text>
</comment>
<comment type="subcellular location">
    <subcellularLocation>
        <location evidence="1">Plastid</location>
        <location evidence="1">Chloroplast thylakoid membrane</location>
        <topology evidence="1">Single-pass membrane protein</topology>
    </subcellularLocation>
</comment>
<comment type="similarity">
    <text evidence="1">Belongs to the PetG family.</text>
</comment>
<keyword id="KW-0150">Chloroplast</keyword>
<keyword id="KW-0249">Electron transport</keyword>
<keyword id="KW-0472">Membrane</keyword>
<keyword id="KW-0602">Photosynthesis</keyword>
<keyword id="KW-0934">Plastid</keyword>
<keyword id="KW-0793">Thylakoid</keyword>
<keyword id="KW-0812">Transmembrane</keyword>
<keyword id="KW-1133">Transmembrane helix</keyword>
<keyword id="KW-0813">Transport</keyword>
<dbReference type="EMBL" id="EU262889">
    <property type="protein sequence ID" value="ABW98891.1"/>
    <property type="molecule type" value="Genomic_DNA"/>
</dbReference>
<dbReference type="RefSeq" id="YP_001687386.1">
    <property type="nucleotide sequence ID" value="NC_010361.1"/>
</dbReference>
<dbReference type="SMR" id="B0Z4X9"/>
<dbReference type="GeneID" id="5951994"/>
<dbReference type="GO" id="GO:0009535">
    <property type="term" value="C:chloroplast thylakoid membrane"/>
    <property type="evidence" value="ECO:0007669"/>
    <property type="project" value="UniProtKB-SubCell"/>
</dbReference>
<dbReference type="GO" id="GO:0009512">
    <property type="term" value="C:cytochrome b6f complex"/>
    <property type="evidence" value="ECO:0007669"/>
    <property type="project" value="InterPro"/>
</dbReference>
<dbReference type="GO" id="GO:0045158">
    <property type="term" value="F:electron transporter, transferring electrons within cytochrome b6/f complex of photosystem II activity"/>
    <property type="evidence" value="ECO:0007669"/>
    <property type="project" value="UniProtKB-UniRule"/>
</dbReference>
<dbReference type="GO" id="GO:0017004">
    <property type="term" value="P:cytochrome complex assembly"/>
    <property type="evidence" value="ECO:0007669"/>
    <property type="project" value="UniProtKB-UniRule"/>
</dbReference>
<dbReference type="GO" id="GO:0015979">
    <property type="term" value="P:photosynthesis"/>
    <property type="evidence" value="ECO:0007669"/>
    <property type="project" value="UniProtKB-KW"/>
</dbReference>
<dbReference type="HAMAP" id="MF_00432">
    <property type="entry name" value="Cytb6_f_PetG"/>
    <property type="match status" value="1"/>
</dbReference>
<dbReference type="InterPro" id="IPR003683">
    <property type="entry name" value="Cyt_6/f_cplx_su5"/>
</dbReference>
<dbReference type="InterPro" id="IPR036099">
    <property type="entry name" value="Cyt_6/f_cplx_su5_sf"/>
</dbReference>
<dbReference type="NCBIfam" id="NF001907">
    <property type="entry name" value="PRK00665.1"/>
    <property type="match status" value="1"/>
</dbReference>
<dbReference type="Pfam" id="PF02529">
    <property type="entry name" value="PetG"/>
    <property type="match status" value="1"/>
</dbReference>
<dbReference type="PIRSF" id="PIRSF000034">
    <property type="entry name" value="Cyt_b6-f_V"/>
    <property type="match status" value="1"/>
</dbReference>
<dbReference type="SUPFAM" id="SSF103446">
    <property type="entry name" value="PetG subunit of the cytochrome b6f complex"/>
    <property type="match status" value="1"/>
</dbReference>
<geneLocation type="chloroplast"/>
<protein>
    <recommendedName>
        <fullName evidence="1">Cytochrome b6-f complex subunit 5</fullName>
    </recommendedName>
    <alternativeName>
        <fullName evidence="1">Cytochrome b6-f complex subunit PetG</fullName>
    </alternativeName>
    <alternativeName>
        <fullName evidence="1">Cytochrome b6-f complex subunit V</fullName>
    </alternativeName>
</protein>
<feature type="chain" id="PRO_0000355403" description="Cytochrome b6-f complex subunit 5">
    <location>
        <begin position="1"/>
        <end position="37"/>
    </location>
</feature>
<feature type="transmembrane region" description="Helical" evidence="1">
    <location>
        <begin position="5"/>
        <end position="25"/>
    </location>
</feature>